<feature type="chain" id="PRO_0000114141" description="Chromosomal replication initiator protein DnaA">
    <location>
        <begin position="1"/>
        <end position="484"/>
    </location>
</feature>
<feature type="region of interest" description="Domain I, interacts with DnaA modulators" evidence="1">
    <location>
        <begin position="1"/>
        <end position="74"/>
    </location>
</feature>
<feature type="region of interest" description="Domain II" evidence="1">
    <location>
        <begin position="74"/>
        <end position="139"/>
    </location>
</feature>
<feature type="region of interest" description="Domain III, AAA+ region" evidence="1">
    <location>
        <begin position="140"/>
        <end position="356"/>
    </location>
</feature>
<feature type="region of interest" description="Domain IV, binds dsDNA" evidence="1">
    <location>
        <begin position="357"/>
        <end position="484"/>
    </location>
</feature>
<feature type="binding site" evidence="1">
    <location>
        <position position="184"/>
    </location>
    <ligand>
        <name>ATP</name>
        <dbReference type="ChEBI" id="CHEBI:30616"/>
    </ligand>
</feature>
<feature type="binding site" evidence="1">
    <location>
        <position position="186"/>
    </location>
    <ligand>
        <name>ATP</name>
        <dbReference type="ChEBI" id="CHEBI:30616"/>
    </ligand>
</feature>
<feature type="binding site" evidence="1">
    <location>
        <position position="187"/>
    </location>
    <ligand>
        <name>ATP</name>
        <dbReference type="ChEBI" id="CHEBI:30616"/>
    </ligand>
</feature>
<feature type="binding site" evidence="1">
    <location>
        <position position="188"/>
    </location>
    <ligand>
        <name>ATP</name>
        <dbReference type="ChEBI" id="CHEBI:30616"/>
    </ligand>
</feature>
<protein>
    <recommendedName>
        <fullName evidence="1">Chromosomal replication initiator protein DnaA</fullName>
    </recommendedName>
</protein>
<dbReference type="EMBL" id="CP000013">
    <property type="protein sequence ID" value="AAU07287.1"/>
    <property type="molecule type" value="Genomic_DNA"/>
</dbReference>
<dbReference type="RefSeq" id="WP_011193757.1">
    <property type="nucleotide sequence ID" value="NZ_CP028872.1"/>
</dbReference>
<dbReference type="SMR" id="Q661I4"/>
<dbReference type="GeneID" id="45161229"/>
<dbReference type="KEGG" id="bga:BG0444"/>
<dbReference type="eggNOG" id="COG0593">
    <property type="taxonomic scope" value="Bacteria"/>
</dbReference>
<dbReference type="HOGENOM" id="CLU_026910_3_1_12"/>
<dbReference type="OrthoDB" id="9807019at2"/>
<dbReference type="Proteomes" id="UP000002276">
    <property type="component" value="Chromosome"/>
</dbReference>
<dbReference type="GO" id="GO:0005737">
    <property type="term" value="C:cytoplasm"/>
    <property type="evidence" value="ECO:0007669"/>
    <property type="project" value="UniProtKB-SubCell"/>
</dbReference>
<dbReference type="GO" id="GO:0005886">
    <property type="term" value="C:plasma membrane"/>
    <property type="evidence" value="ECO:0007669"/>
    <property type="project" value="TreeGrafter"/>
</dbReference>
<dbReference type="GO" id="GO:0005524">
    <property type="term" value="F:ATP binding"/>
    <property type="evidence" value="ECO:0007669"/>
    <property type="project" value="UniProtKB-UniRule"/>
</dbReference>
<dbReference type="GO" id="GO:0016887">
    <property type="term" value="F:ATP hydrolysis activity"/>
    <property type="evidence" value="ECO:0007669"/>
    <property type="project" value="InterPro"/>
</dbReference>
<dbReference type="GO" id="GO:0003688">
    <property type="term" value="F:DNA replication origin binding"/>
    <property type="evidence" value="ECO:0007669"/>
    <property type="project" value="UniProtKB-UniRule"/>
</dbReference>
<dbReference type="GO" id="GO:0008289">
    <property type="term" value="F:lipid binding"/>
    <property type="evidence" value="ECO:0007669"/>
    <property type="project" value="UniProtKB-KW"/>
</dbReference>
<dbReference type="GO" id="GO:0006270">
    <property type="term" value="P:DNA replication initiation"/>
    <property type="evidence" value="ECO:0007669"/>
    <property type="project" value="UniProtKB-UniRule"/>
</dbReference>
<dbReference type="GO" id="GO:0006275">
    <property type="term" value="P:regulation of DNA replication"/>
    <property type="evidence" value="ECO:0007669"/>
    <property type="project" value="UniProtKB-UniRule"/>
</dbReference>
<dbReference type="CDD" id="cd00009">
    <property type="entry name" value="AAA"/>
    <property type="match status" value="1"/>
</dbReference>
<dbReference type="CDD" id="cd06571">
    <property type="entry name" value="Bac_DnaA_C"/>
    <property type="match status" value="1"/>
</dbReference>
<dbReference type="FunFam" id="3.40.50.300:FF:000668">
    <property type="entry name" value="Chromosomal replication initiator protein DnaA"/>
    <property type="match status" value="1"/>
</dbReference>
<dbReference type="Gene3D" id="1.10.1750.10">
    <property type="match status" value="1"/>
</dbReference>
<dbReference type="Gene3D" id="1.10.8.60">
    <property type="match status" value="1"/>
</dbReference>
<dbReference type="Gene3D" id="3.30.300.180">
    <property type="match status" value="1"/>
</dbReference>
<dbReference type="Gene3D" id="3.40.50.300">
    <property type="entry name" value="P-loop containing nucleotide triphosphate hydrolases"/>
    <property type="match status" value="1"/>
</dbReference>
<dbReference type="HAMAP" id="MF_00377">
    <property type="entry name" value="DnaA_bact"/>
    <property type="match status" value="1"/>
</dbReference>
<dbReference type="InterPro" id="IPR003593">
    <property type="entry name" value="AAA+_ATPase"/>
</dbReference>
<dbReference type="InterPro" id="IPR001957">
    <property type="entry name" value="Chromosome_initiator_DnaA"/>
</dbReference>
<dbReference type="InterPro" id="IPR020591">
    <property type="entry name" value="Chromosome_initiator_DnaA-like"/>
</dbReference>
<dbReference type="InterPro" id="IPR018312">
    <property type="entry name" value="Chromosome_initiator_DnaA_CS"/>
</dbReference>
<dbReference type="InterPro" id="IPR013159">
    <property type="entry name" value="DnaA_C"/>
</dbReference>
<dbReference type="InterPro" id="IPR013317">
    <property type="entry name" value="DnaA_dom"/>
</dbReference>
<dbReference type="InterPro" id="IPR024633">
    <property type="entry name" value="DnaA_N_dom"/>
</dbReference>
<dbReference type="InterPro" id="IPR038454">
    <property type="entry name" value="DnaA_N_sf"/>
</dbReference>
<dbReference type="InterPro" id="IPR027417">
    <property type="entry name" value="P-loop_NTPase"/>
</dbReference>
<dbReference type="InterPro" id="IPR010921">
    <property type="entry name" value="Trp_repressor/repl_initiator"/>
</dbReference>
<dbReference type="NCBIfam" id="TIGR00362">
    <property type="entry name" value="DnaA"/>
    <property type="match status" value="1"/>
</dbReference>
<dbReference type="PANTHER" id="PTHR30050">
    <property type="entry name" value="CHROMOSOMAL REPLICATION INITIATOR PROTEIN DNAA"/>
    <property type="match status" value="1"/>
</dbReference>
<dbReference type="PANTHER" id="PTHR30050:SF2">
    <property type="entry name" value="CHROMOSOMAL REPLICATION INITIATOR PROTEIN DNAA"/>
    <property type="match status" value="1"/>
</dbReference>
<dbReference type="Pfam" id="PF00308">
    <property type="entry name" value="Bac_DnaA"/>
    <property type="match status" value="1"/>
</dbReference>
<dbReference type="Pfam" id="PF08299">
    <property type="entry name" value="Bac_DnaA_C"/>
    <property type="match status" value="1"/>
</dbReference>
<dbReference type="Pfam" id="PF11638">
    <property type="entry name" value="DnaA_N"/>
    <property type="match status" value="1"/>
</dbReference>
<dbReference type="PRINTS" id="PR00051">
    <property type="entry name" value="DNAA"/>
</dbReference>
<dbReference type="SMART" id="SM00382">
    <property type="entry name" value="AAA"/>
    <property type="match status" value="1"/>
</dbReference>
<dbReference type="SMART" id="SM00760">
    <property type="entry name" value="Bac_DnaA_C"/>
    <property type="match status" value="1"/>
</dbReference>
<dbReference type="SUPFAM" id="SSF52540">
    <property type="entry name" value="P-loop containing nucleoside triphosphate hydrolases"/>
    <property type="match status" value="1"/>
</dbReference>
<dbReference type="SUPFAM" id="SSF48295">
    <property type="entry name" value="TrpR-like"/>
    <property type="match status" value="1"/>
</dbReference>
<dbReference type="PROSITE" id="PS01008">
    <property type="entry name" value="DNAA"/>
    <property type="match status" value="1"/>
</dbReference>
<keyword id="KW-0067">ATP-binding</keyword>
<keyword id="KW-0963">Cytoplasm</keyword>
<keyword id="KW-0235">DNA replication</keyword>
<keyword id="KW-0238">DNA-binding</keyword>
<keyword id="KW-0446">Lipid-binding</keyword>
<keyword id="KW-0547">Nucleotide-binding</keyword>
<sequence>MEKSKNIWSLILTEIKKELSEEEFYVWFENLCFLESIGDNIQISTPNLFHKNQIEKRFTKKIKEILTKNGYNNVTIVFTNQPPKTYSSKQESEKTTFKETLQNFDKLKGNTLSKEPIQSIKDRIKMYIKEEEPTNFKNPFLKKRYTFENFIIGPNNRLAYNASLSISKNPGKKYNPCLIYGGVGLGKTHLLQSIGNKTEELHNNLKILYVTAENFLNEFVESIKTHETKKFKKKYRYLDMLLIDDIHDLQKKEGIQEELFHTFNALYEDNKQLVFTCDRSPSELTNFTDRLKSRFTRGLNVDISKPNFELRVAIIEKKAEEDGIKVPKDILNLVAQKVTTNVRDLEAAVTKLKAYIDLDNIEIDIDIVEKIIKEIIIYEKETTNESSNKINIENIKKILLRELKIAHKDIEGHSKKPEITKARHIYAYLLRNFTELSTVEIGKIIGGKTHSTVLYSINKIDRDRNNDKEINNLITELMNKIKKN</sequence>
<organism>
    <name type="scientific">Borrelia garinii subsp. bavariensis (strain ATCC BAA-2496 / DSM 23469 / PBi)</name>
    <name type="common">Borreliella bavariensis</name>
    <dbReference type="NCBI Taxonomy" id="290434"/>
    <lineage>
        <taxon>Bacteria</taxon>
        <taxon>Pseudomonadati</taxon>
        <taxon>Spirochaetota</taxon>
        <taxon>Spirochaetia</taxon>
        <taxon>Spirochaetales</taxon>
        <taxon>Borreliaceae</taxon>
        <taxon>Borreliella</taxon>
    </lineage>
</organism>
<name>DNAA_BORGP</name>
<reference key="1">
    <citation type="journal article" date="2004" name="Nucleic Acids Res.">
        <title>Comparative analysis of the Borrelia garinii genome.</title>
        <authorList>
            <person name="Gloeckner G."/>
            <person name="Lehmann R."/>
            <person name="Romualdi A."/>
            <person name="Pradella S."/>
            <person name="Schulte-Spechtel U."/>
            <person name="Schilhabel M."/>
            <person name="Wilske B."/>
            <person name="Suehnel J."/>
            <person name="Platzer M."/>
        </authorList>
    </citation>
    <scope>NUCLEOTIDE SEQUENCE [LARGE SCALE GENOMIC DNA]</scope>
    <source>
        <strain>ATCC BAA-2496 / DSM 23469 / PBi</strain>
    </source>
</reference>
<comment type="function">
    <text evidence="1">Plays an essential role in the initiation and regulation of chromosomal replication. ATP-DnaA binds to the origin of replication (oriC) to initiate formation of the DNA replication initiation complex once per cell cycle. Binds the DnaA box (a 9 base pair repeat at the origin) and separates the double-stranded (ds)DNA. Forms a right-handed helical filament on oriC DNA; dsDNA binds to the exterior of the filament while single-stranded (ss)DNA is stabiized in the filament's interior. The ATP-DnaA-oriC complex binds and stabilizes one strand of the AT-rich DNA unwinding element (DUE), permitting loading of DNA polymerase. After initiation quickly degrades to an ADP-DnaA complex that is not apt for DNA replication. Binds acidic phospholipids.</text>
</comment>
<comment type="subunit">
    <text evidence="1">Oligomerizes as a right-handed, spiral filament on DNA at oriC.</text>
</comment>
<comment type="subcellular location">
    <subcellularLocation>
        <location evidence="1">Cytoplasm</location>
    </subcellularLocation>
</comment>
<comment type="domain">
    <text evidence="1">Domain I is involved in oligomerization and binding regulators, domain II is flexibile and of varying length in different bacteria, domain III forms the AAA+ region, while domain IV binds dsDNA.</text>
</comment>
<comment type="similarity">
    <text evidence="1">Belongs to the DnaA family.</text>
</comment>
<evidence type="ECO:0000255" key="1">
    <source>
        <dbReference type="HAMAP-Rule" id="MF_00377"/>
    </source>
</evidence>
<gene>
    <name evidence="1" type="primary">dnaA</name>
    <name type="ordered locus">BG0444</name>
</gene>
<proteinExistence type="inferred from homology"/>
<accession>Q661I4</accession>